<organismHost>
    <name type="scientific">Magallana gigas</name>
    <name type="common">Pacific oyster</name>
    <name type="synonym">Crassostrea gigas</name>
    <dbReference type="NCBI Taxonomy" id="29159"/>
</organismHost>
<organismHost>
    <name type="scientific">Pecten maximus</name>
    <name type="common">King scallop</name>
    <name type="synonym">Pilgrim's clam</name>
    <dbReference type="NCBI Taxonomy" id="6579"/>
</organismHost>
<gene>
    <name type="ORF">ORF2</name>
</gene>
<dbReference type="EMBL" id="AY509253">
    <property type="protein sequence ID" value="AAS00895.1"/>
    <property type="molecule type" value="Genomic_DNA"/>
</dbReference>
<dbReference type="EMBL" id="AY509253">
    <property type="protein sequence ID" value="AAS01002.1"/>
    <property type="molecule type" value="Genomic_DNA"/>
</dbReference>
<dbReference type="RefSeq" id="YP_024548.1">
    <property type="nucleotide sequence ID" value="NC_005881.2"/>
</dbReference>
<dbReference type="RefSeq" id="YP_024655.1">
    <property type="nucleotide sequence ID" value="NC_005881.2"/>
</dbReference>
<dbReference type="SMR" id="Q6R7B3"/>
<dbReference type="KEGG" id="vg:2948154"/>
<dbReference type="KEGG" id="vg:2948230"/>
<dbReference type="Proteomes" id="UP000007021">
    <property type="component" value="Segment"/>
</dbReference>
<accession>Q6R7B3</accession>
<proteinExistence type="predicted"/>
<feature type="chain" id="PRO_0000385038" description="Uncharacterized protein ORF2">
    <location>
        <begin position="1"/>
        <end position="167"/>
    </location>
</feature>
<sequence>MHIGRREMPRHRKARHCQRFVADSCRSTETHSQVEDRVVRALMEDDVDLWRKMKYMVISSKNNDDKTMDTMRKFCERVTMAEESVEDLYYEKKYVKRFDKDTDDYMGQVTLPSARELAAAMKVGGRIGERRRKRDERVNELERKELELCGYDLVDGQCVLTGNLTRE</sequence>
<name>Y002_OSHVF</name>
<keyword id="KW-1185">Reference proteome</keyword>
<protein>
    <recommendedName>
        <fullName>Uncharacterized protein ORF2</fullName>
    </recommendedName>
</protein>
<reference key="1">
    <citation type="journal article" date="2005" name="J. Gen. Virol.">
        <title>A novel class of herpesvirus with bivalve hosts.</title>
        <authorList>
            <person name="Davison A.J."/>
            <person name="Trus B.L."/>
            <person name="Cheng N."/>
            <person name="Steven A.C."/>
            <person name="Watson M.S."/>
            <person name="Cunningham C."/>
            <person name="Le Deuff R.M."/>
            <person name="Renault T."/>
        </authorList>
    </citation>
    <scope>NUCLEOTIDE SEQUENCE [LARGE SCALE GENOMIC DNA]</scope>
</reference>
<organism>
    <name type="scientific">Ostreid herpesvirus 1 (isolate France)</name>
    <name type="common">OsHV-1</name>
    <name type="synonym">Pacific oyster herpesvirus</name>
    <dbReference type="NCBI Taxonomy" id="654903"/>
    <lineage>
        <taxon>Viruses</taxon>
        <taxon>Duplodnaviria</taxon>
        <taxon>Heunggongvirae</taxon>
        <taxon>Peploviricota</taxon>
        <taxon>Herviviricetes</taxon>
        <taxon>Herpesvirales</taxon>
        <taxon>Malacoherpesviridae</taxon>
        <taxon>Ostreavirus</taxon>
        <taxon>Ostreavirus ostreidmalaco1</taxon>
        <taxon>Ostreid herpesvirus 1</taxon>
    </lineage>
</organism>